<protein>
    <recommendedName>
        <fullName>Beta-defensin 20</fullName>
        <shortName>BD-20</shortName>
    </recommendedName>
    <alternativeName>
        <fullName>Defensin, beta 20</fullName>
    </alternativeName>
</protein>
<feature type="signal peptide" evidence="2">
    <location>
        <begin position="1"/>
        <end position="21"/>
    </location>
</feature>
<feature type="chain" id="PRO_0000352706" description="Beta-defensin 20">
    <location>
        <begin position="22"/>
        <end position="96"/>
    </location>
</feature>
<feature type="disulfide bond" evidence="1">
    <location>
        <begin position="24"/>
        <end position="52"/>
    </location>
</feature>
<feature type="disulfide bond" evidence="1">
    <location>
        <begin position="32"/>
        <end position="46"/>
    </location>
</feature>
<feature type="disulfide bond" evidence="1">
    <location>
        <begin position="36"/>
        <end position="53"/>
    </location>
</feature>
<reference key="1">
    <citation type="journal article" date="2005" name="Physiol. Genomics">
        <title>Cross-species analysis of the mammalian beta-defensin gene family: presence of syntenic gene clusters and preferential expression in the male reproductive tract.</title>
        <authorList>
            <person name="Patil A.A."/>
            <person name="Cai Y."/>
            <person name="Sang Y."/>
            <person name="Blecha F."/>
            <person name="Zhang G."/>
        </authorList>
    </citation>
    <scope>NUCLEOTIDE SEQUENCE [MRNA]</scope>
</reference>
<gene>
    <name type="primary">Defb20</name>
</gene>
<dbReference type="EMBL" id="AY621351">
    <property type="protein sequence ID" value="AAT51890.1"/>
    <property type="molecule type" value="mRNA"/>
</dbReference>
<dbReference type="RefSeq" id="NP_001032606.1">
    <property type="nucleotide sequence ID" value="NM_001037517.2"/>
</dbReference>
<dbReference type="SMR" id="Q32ZH2"/>
<dbReference type="FunCoup" id="Q32ZH2">
    <property type="interactions" value="1"/>
</dbReference>
<dbReference type="STRING" id="10116.ENSRNOP00000031012"/>
<dbReference type="PhosphoSitePlus" id="Q32ZH2"/>
<dbReference type="PaxDb" id="10116-ENSRNOP00000031012"/>
<dbReference type="Ensembl" id="ENSRNOT00000031922.5">
    <property type="protein sequence ID" value="ENSRNOP00000031012.4"/>
    <property type="gene ID" value="ENSRNOG00000023384.5"/>
</dbReference>
<dbReference type="GeneID" id="641641"/>
<dbReference type="KEGG" id="rno:641641"/>
<dbReference type="UCSC" id="RGD:1565177">
    <property type="organism name" value="rat"/>
</dbReference>
<dbReference type="AGR" id="RGD:1565177"/>
<dbReference type="CTD" id="319579"/>
<dbReference type="RGD" id="1565177">
    <property type="gene designation" value="Defb20"/>
</dbReference>
<dbReference type="eggNOG" id="ENOG502TM18">
    <property type="taxonomic scope" value="Eukaryota"/>
</dbReference>
<dbReference type="GeneTree" id="ENSGT00530000064329"/>
<dbReference type="HOGENOM" id="CLU_2399087_0_0_1"/>
<dbReference type="InParanoid" id="Q32ZH2"/>
<dbReference type="OMA" id="ISEMGCL"/>
<dbReference type="OrthoDB" id="9831336at2759"/>
<dbReference type="PhylomeDB" id="Q32ZH2"/>
<dbReference type="PRO" id="PR:Q32ZH2"/>
<dbReference type="Proteomes" id="UP000002494">
    <property type="component" value="Chromosome 3"/>
</dbReference>
<dbReference type="GO" id="GO:0005576">
    <property type="term" value="C:extracellular region"/>
    <property type="evidence" value="ECO:0007669"/>
    <property type="project" value="UniProtKB-SubCell"/>
</dbReference>
<dbReference type="GO" id="GO:0050829">
    <property type="term" value="P:defense response to Gram-negative bacterium"/>
    <property type="evidence" value="ECO:0000266"/>
    <property type="project" value="RGD"/>
</dbReference>
<dbReference type="GO" id="GO:0050830">
    <property type="term" value="P:defense response to Gram-positive bacterium"/>
    <property type="evidence" value="ECO:0000266"/>
    <property type="project" value="RGD"/>
</dbReference>
<dbReference type="GO" id="GO:0045087">
    <property type="term" value="P:innate immune response"/>
    <property type="evidence" value="ECO:0007669"/>
    <property type="project" value="InterPro"/>
</dbReference>
<dbReference type="InterPro" id="IPR050544">
    <property type="entry name" value="Beta-defensin"/>
</dbReference>
<dbReference type="InterPro" id="IPR025933">
    <property type="entry name" value="Beta_defensin_dom"/>
</dbReference>
<dbReference type="PANTHER" id="PTHR15001:SF3">
    <property type="entry name" value="BETA-DEFENSIN 123"/>
    <property type="match status" value="1"/>
</dbReference>
<dbReference type="PANTHER" id="PTHR15001">
    <property type="entry name" value="BETA-DEFENSIN 123-RELATED"/>
    <property type="match status" value="1"/>
</dbReference>
<dbReference type="Pfam" id="PF13841">
    <property type="entry name" value="Defensin_beta_2"/>
    <property type="match status" value="1"/>
</dbReference>
<name>DFB20_RAT</name>
<sequence length="96" mass="11181">MKLPQLLLILLFVVLADSVQPKRCFSNVAGYCRKRCRLVEISEMGCLHGKYCCVNELENKRHKKDTVVEQPMEPRDKSKVQDYMVLPTITYYTITI</sequence>
<proteinExistence type="inferred from homology"/>
<evidence type="ECO:0000250" key="1"/>
<evidence type="ECO:0000255" key="2"/>
<evidence type="ECO:0000305" key="3"/>
<keyword id="KW-0044">Antibiotic</keyword>
<keyword id="KW-0929">Antimicrobial</keyword>
<keyword id="KW-0211">Defensin</keyword>
<keyword id="KW-1015">Disulfide bond</keyword>
<keyword id="KW-1185">Reference proteome</keyword>
<keyword id="KW-0964">Secreted</keyword>
<keyword id="KW-0732">Signal</keyword>
<comment type="function">
    <text evidence="1">Has antibacterial activity.</text>
</comment>
<comment type="subcellular location">
    <subcellularLocation>
        <location evidence="1">Secreted</location>
    </subcellularLocation>
</comment>
<comment type="similarity">
    <text evidence="3">Belongs to the beta-defensin family.</text>
</comment>
<accession>Q32ZH2</accession>
<organism>
    <name type="scientific">Rattus norvegicus</name>
    <name type="common">Rat</name>
    <dbReference type="NCBI Taxonomy" id="10116"/>
    <lineage>
        <taxon>Eukaryota</taxon>
        <taxon>Metazoa</taxon>
        <taxon>Chordata</taxon>
        <taxon>Craniata</taxon>
        <taxon>Vertebrata</taxon>
        <taxon>Euteleostomi</taxon>
        <taxon>Mammalia</taxon>
        <taxon>Eutheria</taxon>
        <taxon>Euarchontoglires</taxon>
        <taxon>Glires</taxon>
        <taxon>Rodentia</taxon>
        <taxon>Myomorpha</taxon>
        <taxon>Muroidea</taxon>
        <taxon>Muridae</taxon>
        <taxon>Murinae</taxon>
        <taxon>Rattus</taxon>
    </lineage>
</organism>